<dbReference type="EMBL" id="LT708304">
    <property type="protein sequence ID" value="SIT99036.1"/>
    <property type="molecule type" value="Genomic_DNA"/>
</dbReference>
<dbReference type="RefSeq" id="NP_854112.1">
    <property type="nucleotide sequence ID" value="NC_002945.3"/>
</dbReference>
<dbReference type="RefSeq" id="WP_003402238.1">
    <property type="nucleotide sequence ID" value="NC_002945.4"/>
</dbReference>
<dbReference type="SMR" id="P0A5C8"/>
<dbReference type="PATRIC" id="fig|233413.5.peg.489"/>
<dbReference type="Proteomes" id="UP000001419">
    <property type="component" value="Chromosome"/>
</dbReference>
<dbReference type="Gene3D" id="2.30.110.10">
    <property type="entry name" value="Electron Transport, Fmn-binding Protein, Chain A"/>
    <property type="match status" value="1"/>
</dbReference>
<dbReference type="InterPro" id="IPR012349">
    <property type="entry name" value="Split_barrel_FMN-bd"/>
</dbReference>
<dbReference type="SUPFAM" id="SSF50475">
    <property type="entry name" value="FMN-binding split barrel"/>
    <property type="match status" value="1"/>
</dbReference>
<feature type="chain" id="PRO_0000103679" description="Uncharacterized protein Mb0449c">
    <location>
        <begin position="1"/>
        <end position="142"/>
    </location>
</feature>
<proteinExistence type="predicted"/>
<keyword id="KW-1185">Reference proteome</keyword>
<name>Y449_MYCBO</name>
<organism>
    <name type="scientific">Mycobacterium bovis (strain ATCC BAA-935 / AF2122/97)</name>
    <dbReference type="NCBI Taxonomy" id="233413"/>
    <lineage>
        <taxon>Bacteria</taxon>
        <taxon>Bacillati</taxon>
        <taxon>Actinomycetota</taxon>
        <taxon>Actinomycetes</taxon>
        <taxon>Mycobacteriales</taxon>
        <taxon>Mycobacteriaceae</taxon>
        <taxon>Mycobacterium</taxon>
        <taxon>Mycobacterium tuberculosis complex</taxon>
    </lineage>
</organism>
<sequence length="142" mass="15036">MGAKKVDLKRLAAALPDYPFAYLITVDDGHRVHTVAVEPVLRELPDGPDGPRAVVDVGLIGGRTRQNLAHRSEVTLLWPPSDPSGYSLIVDGRAQASDAGPDDDTARCGVVPIRALLHRDAAPDSPTAAKGCLHDCVVFSVP</sequence>
<protein>
    <recommendedName>
        <fullName>Uncharacterized protein Mb0449c</fullName>
    </recommendedName>
</protein>
<gene>
    <name type="ordered locus">BQ2027_MB0449C</name>
</gene>
<accession>P0A5C8</accession>
<accession>A0A1R3XWE1</accession>
<accession>Q50813</accession>
<accession>X2BEY3</accession>
<reference key="1">
    <citation type="journal article" date="2003" name="Proc. Natl. Acad. Sci. U.S.A.">
        <title>The complete genome sequence of Mycobacterium bovis.</title>
        <authorList>
            <person name="Garnier T."/>
            <person name="Eiglmeier K."/>
            <person name="Camus J.-C."/>
            <person name="Medina N."/>
            <person name="Mansoor H."/>
            <person name="Pryor M."/>
            <person name="Duthoy S."/>
            <person name="Grondin S."/>
            <person name="Lacroix C."/>
            <person name="Monsempe C."/>
            <person name="Simon S."/>
            <person name="Harris B."/>
            <person name="Atkin R."/>
            <person name="Doggett J."/>
            <person name="Mayes R."/>
            <person name="Keating L."/>
            <person name="Wheeler P.R."/>
            <person name="Parkhill J."/>
            <person name="Barrell B.G."/>
            <person name="Cole S.T."/>
            <person name="Gordon S.V."/>
            <person name="Hewinson R.G."/>
        </authorList>
    </citation>
    <scope>NUCLEOTIDE SEQUENCE [LARGE SCALE GENOMIC DNA]</scope>
    <source>
        <strain>ATCC BAA-935 / AF2122/97</strain>
    </source>
</reference>
<reference key="2">
    <citation type="journal article" date="2017" name="Genome Announc.">
        <title>Updated reference genome sequence and annotation of Mycobacterium bovis AF2122/97.</title>
        <authorList>
            <person name="Malone K.M."/>
            <person name="Farrell D."/>
            <person name="Stuber T.P."/>
            <person name="Schubert O.T."/>
            <person name="Aebersold R."/>
            <person name="Robbe-Austerman S."/>
            <person name="Gordon S.V."/>
        </authorList>
    </citation>
    <scope>NUCLEOTIDE SEQUENCE [LARGE SCALE GENOMIC DNA]</scope>
    <scope>GENOME REANNOTATION</scope>
    <source>
        <strain>ATCC BAA-935 / AF2122/97</strain>
    </source>
</reference>